<reference key="1">
    <citation type="journal article" date="1999" name="Nature">
        <title>Evidence for lateral gene transfer between Archaea and Bacteria from genome sequence of Thermotoga maritima.</title>
        <authorList>
            <person name="Nelson K.E."/>
            <person name="Clayton R.A."/>
            <person name="Gill S.R."/>
            <person name="Gwinn M.L."/>
            <person name="Dodson R.J."/>
            <person name="Haft D.H."/>
            <person name="Hickey E.K."/>
            <person name="Peterson J.D."/>
            <person name="Nelson W.C."/>
            <person name="Ketchum K.A."/>
            <person name="McDonald L.A."/>
            <person name="Utterback T.R."/>
            <person name="Malek J.A."/>
            <person name="Linher K.D."/>
            <person name="Garrett M.M."/>
            <person name="Stewart A.M."/>
            <person name="Cotton M.D."/>
            <person name="Pratt M.S."/>
            <person name="Phillips C.A."/>
            <person name="Richardson D.L."/>
            <person name="Heidelberg J.F."/>
            <person name="Sutton G.G."/>
            <person name="Fleischmann R.D."/>
            <person name="Eisen J.A."/>
            <person name="White O."/>
            <person name="Salzberg S.L."/>
            <person name="Smith H.O."/>
            <person name="Venter J.C."/>
            <person name="Fraser C.M."/>
        </authorList>
    </citation>
    <scope>NUCLEOTIDE SEQUENCE [LARGE SCALE GENOMIC DNA]</scope>
    <source>
        <strain>ATCC 43589 / DSM 3109 / JCM 10099 / NBRC 100826 / MSB8</strain>
    </source>
</reference>
<organism>
    <name type="scientific">Thermotoga maritima (strain ATCC 43589 / DSM 3109 / JCM 10099 / NBRC 100826 / MSB8)</name>
    <dbReference type="NCBI Taxonomy" id="243274"/>
    <lineage>
        <taxon>Bacteria</taxon>
        <taxon>Thermotogati</taxon>
        <taxon>Thermotogota</taxon>
        <taxon>Thermotogae</taxon>
        <taxon>Thermotogales</taxon>
        <taxon>Thermotogaceae</taxon>
        <taxon>Thermotoga</taxon>
    </lineage>
</organism>
<keyword id="KW-0002">3D-structure</keyword>
<keyword id="KW-0963">Cytoplasm</keyword>
<keyword id="KW-0238">DNA-binding</keyword>
<keyword id="KW-0520">NAD</keyword>
<keyword id="KW-1185">Reference proteome</keyword>
<keyword id="KW-0678">Repressor</keyword>
<keyword id="KW-0804">Transcription</keyword>
<keyword id="KW-0805">Transcription regulation</keyword>
<proteinExistence type="evidence at protein level"/>
<dbReference type="EMBL" id="AE000512">
    <property type="protein sequence ID" value="AAD35262.1"/>
    <property type="molecule type" value="Genomic_DNA"/>
</dbReference>
<dbReference type="PIR" id="G72408">
    <property type="entry name" value="G72408"/>
</dbReference>
<dbReference type="RefSeq" id="NP_227984.1">
    <property type="nucleotide sequence ID" value="NC_000853.1"/>
</dbReference>
<dbReference type="RefSeq" id="WP_004082798.1">
    <property type="nucleotide sequence ID" value="NC_000853.1"/>
</dbReference>
<dbReference type="PDB" id="5ZZ5">
    <property type="method" value="X-ray"/>
    <property type="resolution" value="2.00 A"/>
    <property type="chains" value="A/B/C/D=1-208"/>
</dbReference>
<dbReference type="PDB" id="5ZZ6">
    <property type="method" value="X-ray"/>
    <property type="resolution" value="2.20 A"/>
    <property type="chains" value="A/B/C/D=1-208"/>
</dbReference>
<dbReference type="PDB" id="5ZZ7">
    <property type="method" value="X-ray"/>
    <property type="resolution" value="2.45 A"/>
    <property type="chains" value="A/B=1-208"/>
</dbReference>
<dbReference type="PDB" id="7WB3">
    <property type="method" value="X-ray"/>
    <property type="resolution" value="2.40 A"/>
    <property type="chains" value="A/B=1-208"/>
</dbReference>
<dbReference type="PDBsum" id="5ZZ5"/>
<dbReference type="PDBsum" id="5ZZ6"/>
<dbReference type="PDBsum" id="5ZZ7"/>
<dbReference type="PDBsum" id="7WB3"/>
<dbReference type="SMR" id="Q9WY16"/>
<dbReference type="FunCoup" id="Q9WY16">
    <property type="interactions" value="17"/>
</dbReference>
<dbReference type="STRING" id="243274.TM_0169"/>
<dbReference type="PaxDb" id="243274-THEMA_03955"/>
<dbReference type="EnsemblBacteria" id="AAD35262">
    <property type="protein sequence ID" value="AAD35262"/>
    <property type="gene ID" value="TM_0169"/>
</dbReference>
<dbReference type="KEGG" id="tma:TM0169"/>
<dbReference type="KEGG" id="tmi:THEMA_03955"/>
<dbReference type="KEGG" id="tmm:Tmari_0167"/>
<dbReference type="KEGG" id="tmw:THMA_0165"/>
<dbReference type="eggNOG" id="COG2344">
    <property type="taxonomic scope" value="Bacteria"/>
</dbReference>
<dbReference type="InParanoid" id="Q9WY16"/>
<dbReference type="OrthoDB" id="9784760at2"/>
<dbReference type="Proteomes" id="UP000008183">
    <property type="component" value="Chromosome"/>
</dbReference>
<dbReference type="GO" id="GO:0005737">
    <property type="term" value="C:cytoplasm"/>
    <property type="evidence" value="ECO:0007669"/>
    <property type="project" value="UniProtKB-SubCell"/>
</dbReference>
<dbReference type="GO" id="GO:0003677">
    <property type="term" value="F:DNA binding"/>
    <property type="evidence" value="ECO:0007669"/>
    <property type="project" value="UniProtKB-UniRule"/>
</dbReference>
<dbReference type="GO" id="GO:0003700">
    <property type="term" value="F:DNA-binding transcription factor activity"/>
    <property type="evidence" value="ECO:0007669"/>
    <property type="project" value="UniProtKB-UniRule"/>
</dbReference>
<dbReference type="GO" id="GO:0045892">
    <property type="term" value="P:negative regulation of DNA-templated transcription"/>
    <property type="evidence" value="ECO:0007669"/>
    <property type="project" value="InterPro"/>
</dbReference>
<dbReference type="GO" id="GO:0051775">
    <property type="term" value="P:response to redox state"/>
    <property type="evidence" value="ECO:0007669"/>
    <property type="project" value="InterPro"/>
</dbReference>
<dbReference type="Gene3D" id="3.40.50.720">
    <property type="entry name" value="NAD(P)-binding Rossmann-like Domain"/>
    <property type="match status" value="1"/>
</dbReference>
<dbReference type="Gene3D" id="1.10.10.10">
    <property type="entry name" value="Winged helix-like DNA-binding domain superfamily/Winged helix DNA-binding domain"/>
    <property type="match status" value="1"/>
</dbReference>
<dbReference type="HAMAP" id="MF_01131">
    <property type="entry name" value="Rex"/>
    <property type="match status" value="1"/>
</dbReference>
<dbReference type="InterPro" id="IPR003781">
    <property type="entry name" value="CoA-bd"/>
</dbReference>
<dbReference type="InterPro" id="IPR036291">
    <property type="entry name" value="NAD(P)-bd_dom_sf"/>
</dbReference>
<dbReference type="InterPro" id="IPR009718">
    <property type="entry name" value="Rex_DNA-bd_C_dom"/>
</dbReference>
<dbReference type="InterPro" id="IPR022876">
    <property type="entry name" value="Tscrpt_rep_Rex"/>
</dbReference>
<dbReference type="InterPro" id="IPR036388">
    <property type="entry name" value="WH-like_DNA-bd_sf"/>
</dbReference>
<dbReference type="InterPro" id="IPR036390">
    <property type="entry name" value="WH_DNA-bd_sf"/>
</dbReference>
<dbReference type="NCBIfam" id="NF003989">
    <property type="entry name" value="PRK05472.1-3"/>
    <property type="match status" value="1"/>
</dbReference>
<dbReference type="NCBIfam" id="NF003993">
    <property type="entry name" value="PRK05472.2-2"/>
    <property type="match status" value="1"/>
</dbReference>
<dbReference type="NCBIfam" id="NF003994">
    <property type="entry name" value="PRK05472.2-3"/>
    <property type="match status" value="1"/>
</dbReference>
<dbReference type="NCBIfam" id="NF003995">
    <property type="entry name" value="PRK05472.2-4"/>
    <property type="match status" value="1"/>
</dbReference>
<dbReference type="NCBIfam" id="NF003996">
    <property type="entry name" value="PRK05472.2-5"/>
    <property type="match status" value="1"/>
</dbReference>
<dbReference type="PANTHER" id="PTHR35786">
    <property type="entry name" value="REDOX-SENSING TRANSCRIPTIONAL REPRESSOR REX"/>
    <property type="match status" value="1"/>
</dbReference>
<dbReference type="PANTHER" id="PTHR35786:SF1">
    <property type="entry name" value="REDOX-SENSING TRANSCRIPTIONAL REPRESSOR REX 1"/>
    <property type="match status" value="1"/>
</dbReference>
<dbReference type="Pfam" id="PF02629">
    <property type="entry name" value="CoA_binding"/>
    <property type="match status" value="1"/>
</dbReference>
<dbReference type="Pfam" id="PF06971">
    <property type="entry name" value="Put_DNA-bind_N"/>
    <property type="match status" value="1"/>
</dbReference>
<dbReference type="SMART" id="SM00881">
    <property type="entry name" value="CoA_binding"/>
    <property type="match status" value="1"/>
</dbReference>
<dbReference type="SUPFAM" id="SSF51735">
    <property type="entry name" value="NAD(P)-binding Rossmann-fold domains"/>
    <property type="match status" value="1"/>
</dbReference>
<dbReference type="SUPFAM" id="SSF46785">
    <property type="entry name" value="Winged helix' DNA-binding domain"/>
    <property type="match status" value="1"/>
</dbReference>
<feature type="chain" id="PRO_0000097926" description="Redox-sensing transcriptional repressor Rex 1">
    <location>
        <begin position="1"/>
        <end position="208"/>
    </location>
</feature>
<feature type="DNA-binding region" description="H-T-H motif" evidence="1">
    <location>
        <begin position="15"/>
        <end position="54"/>
    </location>
</feature>
<feature type="binding site" evidence="1">
    <location>
        <begin position="89"/>
        <end position="94"/>
    </location>
    <ligand>
        <name>NAD(+)</name>
        <dbReference type="ChEBI" id="CHEBI:57540"/>
    </ligand>
</feature>
<feature type="helix" evidence="2">
    <location>
        <begin position="10"/>
        <end position="26"/>
    </location>
</feature>
<feature type="strand" evidence="2">
    <location>
        <begin position="29"/>
        <end position="31"/>
    </location>
</feature>
<feature type="helix" evidence="2">
    <location>
        <begin position="33"/>
        <end position="40"/>
    </location>
</feature>
<feature type="helix" evidence="2">
    <location>
        <begin position="44"/>
        <end position="51"/>
    </location>
</feature>
<feature type="helix" evidence="2">
    <location>
        <begin position="52"/>
        <end position="58"/>
    </location>
</feature>
<feature type="turn" evidence="3">
    <location>
        <begin position="60"/>
        <end position="62"/>
    </location>
</feature>
<feature type="strand" evidence="2">
    <location>
        <begin position="63"/>
        <end position="65"/>
    </location>
</feature>
<feature type="helix" evidence="2">
    <location>
        <begin position="66"/>
        <end position="77"/>
    </location>
</feature>
<feature type="turn" evidence="2">
    <location>
        <begin position="78"/>
        <end position="80"/>
    </location>
</feature>
<feature type="strand" evidence="2">
    <location>
        <begin position="83"/>
        <end position="88"/>
    </location>
</feature>
<feature type="helix" evidence="2">
    <location>
        <begin position="92"/>
        <end position="98"/>
    </location>
</feature>
<feature type="helix" evidence="2">
    <location>
        <begin position="101"/>
        <end position="105"/>
    </location>
</feature>
<feature type="strand" evidence="2">
    <location>
        <begin position="108"/>
        <end position="116"/>
    </location>
</feature>
<feature type="turn" evidence="2">
    <location>
        <begin position="118"/>
        <end position="122"/>
    </location>
</feature>
<feature type="strand" evidence="2">
    <location>
        <begin position="123"/>
        <end position="126"/>
    </location>
</feature>
<feature type="strand" evidence="2">
    <location>
        <begin position="129"/>
        <end position="133"/>
    </location>
</feature>
<feature type="helix" evidence="2">
    <location>
        <begin position="134"/>
        <end position="136"/>
    </location>
</feature>
<feature type="helix" evidence="2">
    <location>
        <begin position="137"/>
        <end position="143"/>
    </location>
</feature>
<feature type="strand" evidence="2">
    <location>
        <begin position="148"/>
        <end position="151"/>
    </location>
</feature>
<feature type="helix" evidence="2">
    <location>
        <begin position="155"/>
        <end position="167"/>
    </location>
</feature>
<feature type="strand" evidence="2">
    <location>
        <begin position="172"/>
        <end position="175"/>
    </location>
</feature>
<feature type="strand" evidence="2">
    <location>
        <begin position="177"/>
        <end position="179"/>
    </location>
</feature>
<feature type="strand" evidence="2">
    <location>
        <begin position="187"/>
        <end position="189"/>
    </location>
</feature>
<feature type="helix" evidence="2">
    <location>
        <begin position="192"/>
        <end position="206"/>
    </location>
</feature>
<comment type="function">
    <text evidence="1">Modulates transcription in response to changes in cellular NADH/NAD(+) redox state.</text>
</comment>
<comment type="subunit">
    <text evidence="1">Homodimer.</text>
</comment>
<comment type="subcellular location">
    <subcellularLocation>
        <location evidence="1">Cytoplasm</location>
    </subcellularLocation>
</comment>
<comment type="similarity">
    <text evidence="1">Belongs to the transcriptional regulatory Rex family.</text>
</comment>
<sequence length="208" mass="22954">MAEKIPKPVSKRLVSYYMCLERLLDEGVEVVSSEELARRLDLKASQIRKDLSYFGEFGKRGVGYNVEHLYDAIGEILGVKKEWKLVVVGAGNIGRAVANYTVMKEKGFRIIGIFDSDPSKIGKEAAPGLTVSDVSELEKFVEEHGVEIGVIAVPAEHAQEIAERLEKAGIKGILNFAPVKIKVSVPVENIDITASLRVLTFEIVRRNS</sequence>
<accession>Q9WY16</accession>
<name>REX1_THEMA</name>
<protein>
    <recommendedName>
        <fullName evidence="1">Redox-sensing transcriptional repressor Rex 1</fullName>
    </recommendedName>
</protein>
<gene>
    <name evidence="1" type="primary">rex1</name>
    <name type="ordered locus">TM_0169</name>
</gene>
<evidence type="ECO:0000255" key="1">
    <source>
        <dbReference type="HAMAP-Rule" id="MF_01131"/>
    </source>
</evidence>
<evidence type="ECO:0007829" key="2">
    <source>
        <dbReference type="PDB" id="5ZZ5"/>
    </source>
</evidence>
<evidence type="ECO:0007829" key="3">
    <source>
        <dbReference type="PDB" id="7WB3"/>
    </source>
</evidence>